<sequence length="421" mass="44931">MPPKRIAKRRSPPEDAIPKSKKVKVSHRSHNTEPGLVLTLGQGDVGQLGLGESVLERKKPALVPLLQDVVQAEAGGMHTVCLSQSGQVYSFGCNDEGALGRDTSVEGSEMVPGKVELQEKVVQVSAGDSHTAALTEDGRVFLWGSFRDNNGVIGLLEPMKKSMVPVQVQLDAPVVKVASGNDHLVMLTNDGDLYTLGCGEQGQLGRVPELFANRGGRQGLGRLLVPRCVLLKSRGTRGRVRFQDAFCGAYFTFAISREGHVYGFGLSNYHQLGTPGTGSCFIPQNLTSFKNSTKSWVGFSGGQHHTVCMDSEGKAYSLGRAEYGRLGLGEGAEEKSIPTLISRLPVVSSVACGASVGYAVSKDGRVFAWGMGTNYQLGTGQDEDAWSPVEMTGKQLENRVVLTVSSGGQHTVLLVKDQAQS</sequence>
<accession>Q8VE37</accession>
<accession>Q3UDB6</accession>
<name>RCC1_MOUSE</name>
<dbReference type="EMBL" id="AK150153">
    <property type="protein sequence ID" value="BAE29345.1"/>
    <property type="molecule type" value="mRNA"/>
</dbReference>
<dbReference type="EMBL" id="BC019807">
    <property type="protein sequence ID" value="AAH19807.1"/>
    <property type="molecule type" value="mRNA"/>
</dbReference>
<dbReference type="CCDS" id="CCDS18723.1"/>
<dbReference type="RefSeq" id="NP_598639.1">
    <property type="nucleotide sequence ID" value="NM_133878.3"/>
</dbReference>
<dbReference type="SMR" id="Q8VE37"/>
<dbReference type="BioGRID" id="221378">
    <property type="interactions" value="77"/>
</dbReference>
<dbReference type="FunCoup" id="Q8VE37">
    <property type="interactions" value="3518"/>
</dbReference>
<dbReference type="IntAct" id="Q8VE37">
    <property type="interactions" value="63"/>
</dbReference>
<dbReference type="MINT" id="Q8VE37"/>
<dbReference type="STRING" id="10090.ENSMUSP00000030726"/>
<dbReference type="iPTMnet" id="Q8VE37"/>
<dbReference type="PhosphoSitePlus" id="Q8VE37"/>
<dbReference type="SwissPalm" id="Q8VE37"/>
<dbReference type="jPOST" id="Q8VE37"/>
<dbReference type="PaxDb" id="10090-ENSMUSP00000081271"/>
<dbReference type="ProteomicsDB" id="255053"/>
<dbReference type="Pumba" id="Q8VE37"/>
<dbReference type="Antibodypedia" id="4212">
    <property type="antibodies" value="440 antibodies from 41 providers"/>
</dbReference>
<dbReference type="DNASU" id="100088"/>
<dbReference type="Ensembl" id="ENSMUST00000084250.11">
    <property type="protein sequence ID" value="ENSMUSP00000081271.5"/>
    <property type="gene ID" value="ENSMUSG00000028896.14"/>
</dbReference>
<dbReference type="Ensembl" id="ENSMUST00000105951.8">
    <property type="protein sequence ID" value="ENSMUSP00000101571.2"/>
    <property type="gene ID" value="ENSMUSG00000028896.14"/>
</dbReference>
<dbReference type="GeneID" id="100088"/>
<dbReference type="KEGG" id="mmu:100088"/>
<dbReference type="UCSC" id="uc008vbc.2">
    <property type="organism name" value="mouse"/>
</dbReference>
<dbReference type="AGR" id="MGI:1913989"/>
<dbReference type="CTD" id="1104"/>
<dbReference type="MGI" id="MGI:1913989">
    <property type="gene designation" value="Rcc1"/>
</dbReference>
<dbReference type="VEuPathDB" id="HostDB:ENSMUSG00000028896"/>
<dbReference type="eggNOG" id="KOG1426">
    <property type="taxonomic scope" value="Eukaryota"/>
</dbReference>
<dbReference type="GeneTree" id="ENSGT00940000155543"/>
<dbReference type="HOGENOM" id="CLU_005210_6_2_1"/>
<dbReference type="InParanoid" id="Q8VE37"/>
<dbReference type="OMA" id="IFVWGTG"/>
<dbReference type="OrthoDB" id="61110at2759"/>
<dbReference type="PhylomeDB" id="Q8VE37"/>
<dbReference type="TreeFam" id="TF101139"/>
<dbReference type="Reactome" id="R-MMU-9615933">
    <property type="pathway name" value="Postmitotic nuclear pore complex (NPC) reformation"/>
</dbReference>
<dbReference type="BioGRID-ORCS" id="100088">
    <property type="hits" value="27 hits in 83 CRISPR screens"/>
</dbReference>
<dbReference type="ChiTaRS" id="Rcc1">
    <property type="organism name" value="mouse"/>
</dbReference>
<dbReference type="PRO" id="PR:Q8VE37"/>
<dbReference type="Proteomes" id="UP000000589">
    <property type="component" value="Chromosome 4"/>
</dbReference>
<dbReference type="RNAct" id="Q8VE37">
    <property type="molecule type" value="protein"/>
</dbReference>
<dbReference type="Bgee" id="ENSMUSG00000028896">
    <property type="expression patterns" value="Expressed in ectoplacental cone and 239 other cell types or tissues"/>
</dbReference>
<dbReference type="ExpressionAtlas" id="Q8VE37">
    <property type="expression patterns" value="baseline and differential"/>
</dbReference>
<dbReference type="GO" id="GO:0000785">
    <property type="term" value="C:chromatin"/>
    <property type="evidence" value="ECO:0007669"/>
    <property type="project" value="Ensembl"/>
</dbReference>
<dbReference type="GO" id="GO:0000794">
    <property type="term" value="C:condensed nuclear chromosome"/>
    <property type="evidence" value="ECO:0007669"/>
    <property type="project" value="Ensembl"/>
</dbReference>
<dbReference type="GO" id="GO:0005737">
    <property type="term" value="C:cytoplasm"/>
    <property type="evidence" value="ECO:0000250"/>
    <property type="project" value="UniProtKB"/>
</dbReference>
<dbReference type="GO" id="GO:0005654">
    <property type="term" value="C:nucleoplasm"/>
    <property type="evidence" value="ECO:0007669"/>
    <property type="project" value="Ensembl"/>
</dbReference>
<dbReference type="GO" id="GO:0005634">
    <property type="term" value="C:nucleus"/>
    <property type="evidence" value="ECO:0000250"/>
    <property type="project" value="UniProtKB"/>
</dbReference>
<dbReference type="GO" id="GO:0032991">
    <property type="term" value="C:protein-containing complex"/>
    <property type="evidence" value="ECO:0007669"/>
    <property type="project" value="Ensembl"/>
</dbReference>
<dbReference type="GO" id="GO:0005085">
    <property type="term" value="F:guanyl-nucleotide exchange factor activity"/>
    <property type="evidence" value="ECO:0000314"/>
    <property type="project" value="MGI"/>
</dbReference>
<dbReference type="GO" id="GO:0042393">
    <property type="term" value="F:histone binding"/>
    <property type="evidence" value="ECO:0007669"/>
    <property type="project" value="Ensembl"/>
</dbReference>
<dbReference type="GO" id="GO:0031492">
    <property type="term" value="F:nucleosomal DNA binding"/>
    <property type="evidence" value="ECO:0000250"/>
    <property type="project" value="UniProtKB"/>
</dbReference>
<dbReference type="GO" id="GO:0046982">
    <property type="term" value="F:protein heterodimerization activity"/>
    <property type="evidence" value="ECO:0007669"/>
    <property type="project" value="Ensembl"/>
</dbReference>
<dbReference type="GO" id="GO:0031267">
    <property type="term" value="F:small GTPase binding"/>
    <property type="evidence" value="ECO:0007669"/>
    <property type="project" value="Ensembl"/>
</dbReference>
<dbReference type="GO" id="GO:0043199">
    <property type="term" value="F:sulfate binding"/>
    <property type="evidence" value="ECO:0007669"/>
    <property type="project" value="Ensembl"/>
</dbReference>
<dbReference type="GO" id="GO:0051301">
    <property type="term" value="P:cell division"/>
    <property type="evidence" value="ECO:0007669"/>
    <property type="project" value="UniProtKB-KW"/>
</dbReference>
<dbReference type="GO" id="GO:0007059">
    <property type="term" value="P:chromosome segregation"/>
    <property type="evidence" value="ECO:0000250"/>
    <property type="project" value="UniProtKB"/>
</dbReference>
<dbReference type="GO" id="GO:0000082">
    <property type="term" value="P:G1/S transition of mitotic cell cycle"/>
    <property type="evidence" value="ECO:0007669"/>
    <property type="project" value="Ensembl"/>
</dbReference>
<dbReference type="GO" id="GO:0007052">
    <property type="term" value="P:mitotic spindle organization"/>
    <property type="evidence" value="ECO:0007669"/>
    <property type="project" value="Ensembl"/>
</dbReference>
<dbReference type="GO" id="GO:0007088">
    <property type="term" value="P:regulation of mitotic nuclear division"/>
    <property type="evidence" value="ECO:0007669"/>
    <property type="project" value="Ensembl"/>
</dbReference>
<dbReference type="GO" id="GO:0051225">
    <property type="term" value="P:spindle assembly"/>
    <property type="evidence" value="ECO:0000250"/>
    <property type="project" value="UniProtKB"/>
</dbReference>
<dbReference type="FunFam" id="2.130.10.30:FF:000008">
    <property type="entry name" value="regulator of chromosome condensation isoform X1"/>
    <property type="match status" value="1"/>
</dbReference>
<dbReference type="Gene3D" id="2.130.10.30">
    <property type="entry name" value="Regulator of chromosome condensation 1/beta-lactamase-inhibitor protein II"/>
    <property type="match status" value="1"/>
</dbReference>
<dbReference type="InterPro" id="IPR051553">
    <property type="entry name" value="Ran_GTPase-activating"/>
</dbReference>
<dbReference type="InterPro" id="IPR009091">
    <property type="entry name" value="RCC1/BLIP-II"/>
</dbReference>
<dbReference type="InterPro" id="IPR000408">
    <property type="entry name" value="Reg_chr_condens"/>
</dbReference>
<dbReference type="PANTHER" id="PTHR45982">
    <property type="entry name" value="REGULATOR OF CHROMOSOME CONDENSATION"/>
    <property type="match status" value="1"/>
</dbReference>
<dbReference type="PANTHER" id="PTHR45982:SF9">
    <property type="entry name" value="REGULATOR OF CHROMOSOME CONDENSATION"/>
    <property type="match status" value="1"/>
</dbReference>
<dbReference type="Pfam" id="PF25390">
    <property type="entry name" value="WD40_RLD"/>
    <property type="match status" value="1"/>
</dbReference>
<dbReference type="PRINTS" id="PR00633">
    <property type="entry name" value="RCCNDNSATION"/>
</dbReference>
<dbReference type="SUPFAM" id="SSF50985">
    <property type="entry name" value="RCC1/BLIP-II"/>
    <property type="match status" value="1"/>
</dbReference>
<dbReference type="PROSITE" id="PS00625">
    <property type="entry name" value="RCC1_1"/>
    <property type="match status" value="1"/>
</dbReference>
<dbReference type="PROSITE" id="PS00626">
    <property type="entry name" value="RCC1_2"/>
    <property type="match status" value="4"/>
</dbReference>
<dbReference type="PROSITE" id="PS50012">
    <property type="entry name" value="RCC1_3"/>
    <property type="match status" value="7"/>
</dbReference>
<gene>
    <name type="primary">Rcc1</name>
    <name type="synonym">Chc1</name>
</gene>
<proteinExistence type="evidence at protein level"/>
<keyword id="KW-0131">Cell cycle</keyword>
<keyword id="KW-0132">Cell division</keyword>
<keyword id="KW-0158">Chromosome</keyword>
<keyword id="KW-0963">Cytoplasm</keyword>
<keyword id="KW-0238">DNA-binding</keyword>
<keyword id="KW-0344">Guanine-nucleotide releasing factor</keyword>
<keyword id="KW-0488">Methylation</keyword>
<keyword id="KW-0498">Mitosis</keyword>
<keyword id="KW-0539">Nucleus</keyword>
<keyword id="KW-0597">Phosphoprotein</keyword>
<keyword id="KW-1185">Reference proteome</keyword>
<keyword id="KW-0677">Repeat</keyword>
<evidence type="ECO:0000250" key="1">
    <source>
        <dbReference type="UniProtKB" id="P18754"/>
    </source>
</evidence>
<evidence type="ECO:0000256" key="2">
    <source>
        <dbReference type="SAM" id="MobiDB-lite"/>
    </source>
</evidence>
<evidence type="ECO:0000269" key="3">
    <source>
    </source>
</evidence>
<evidence type="ECO:0000305" key="4"/>
<feature type="initiator methionine" description="Removed" evidence="3">
    <location>
        <position position="1"/>
    </location>
</feature>
<feature type="chain" id="PRO_0000206630" description="Regulator of chromosome condensation">
    <location>
        <begin position="2"/>
        <end position="421"/>
    </location>
</feature>
<feature type="repeat" description="RCC1 1">
    <location>
        <begin position="34"/>
        <end position="84"/>
    </location>
</feature>
<feature type="repeat" description="RCC1 2">
    <location>
        <begin position="85"/>
        <end position="136"/>
    </location>
</feature>
<feature type="repeat" description="RCC1 3">
    <location>
        <begin position="138"/>
        <end position="189"/>
    </location>
</feature>
<feature type="repeat" description="RCC1 4">
    <location>
        <begin position="191"/>
        <end position="257"/>
    </location>
</feature>
<feature type="repeat" description="RCC1 5">
    <location>
        <begin position="258"/>
        <end position="311"/>
    </location>
</feature>
<feature type="repeat" description="RCC1 6">
    <location>
        <begin position="312"/>
        <end position="362"/>
    </location>
</feature>
<feature type="repeat" description="RCC1 7">
    <location>
        <begin position="363"/>
        <end position="416"/>
    </location>
</feature>
<feature type="region of interest" description="Disordered" evidence="2">
    <location>
        <begin position="1"/>
        <end position="36"/>
    </location>
</feature>
<feature type="short sequence motif" description="Bipartite nuclear localization signal" evidence="1">
    <location>
        <begin position="4"/>
        <end position="24"/>
    </location>
</feature>
<feature type="compositionally biased region" description="Basic residues" evidence="2">
    <location>
        <begin position="1"/>
        <end position="10"/>
    </location>
</feature>
<feature type="compositionally biased region" description="Basic residues" evidence="2">
    <location>
        <begin position="19"/>
        <end position="29"/>
    </location>
</feature>
<feature type="modified residue" description="N,N-dimethylproline; alternate" evidence="3">
    <location>
        <position position="2"/>
    </location>
</feature>
<feature type="modified residue" description="N-methylproline; alternate" evidence="3">
    <location>
        <position position="2"/>
    </location>
</feature>
<feature type="modified residue" description="Phosphoserine" evidence="1">
    <location>
        <position position="11"/>
    </location>
</feature>
<feature type="sequence conflict" description="In Ref. 1; BAE29345." evidence="4" ref="1">
    <original>V</original>
    <variation>M</variation>
    <location>
        <position position="45"/>
    </location>
</feature>
<reference key="1">
    <citation type="journal article" date="2005" name="Science">
        <title>The transcriptional landscape of the mammalian genome.</title>
        <authorList>
            <person name="Carninci P."/>
            <person name="Kasukawa T."/>
            <person name="Katayama S."/>
            <person name="Gough J."/>
            <person name="Frith M.C."/>
            <person name="Maeda N."/>
            <person name="Oyama R."/>
            <person name="Ravasi T."/>
            <person name="Lenhard B."/>
            <person name="Wells C."/>
            <person name="Kodzius R."/>
            <person name="Shimokawa K."/>
            <person name="Bajic V.B."/>
            <person name="Brenner S.E."/>
            <person name="Batalov S."/>
            <person name="Forrest A.R."/>
            <person name="Zavolan M."/>
            <person name="Davis M.J."/>
            <person name="Wilming L.G."/>
            <person name="Aidinis V."/>
            <person name="Allen J.E."/>
            <person name="Ambesi-Impiombato A."/>
            <person name="Apweiler R."/>
            <person name="Aturaliya R.N."/>
            <person name="Bailey T.L."/>
            <person name="Bansal M."/>
            <person name="Baxter L."/>
            <person name="Beisel K.W."/>
            <person name="Bersano T."/>
            <person name="Bono H."/>
            <person name="Chalk A.M."/>
            <person name="Chiu K.P."/>
            <person name="Choudhary V."/>
            <person name="Christoffels A."/>
            <person name="Clutterbuck D.R."/>
            <person name="Crowe M.L."/>
            <person name="Dalla E."/>
            <person name="Dalrymple B.P."/>
            <person name="de Bono B."/>
            <person name="Della Gatta G."/>
            <person name="di Bernardo D."/>
            <person name="Down T."/>
            <person name="Engstrom P."/>
            <person name="Fagiolini M."/>
            <person name="Faulkner G."/>
            <person name="Fletcher C.F."/>
            <person name="Fukushima T."/>
            <person name="Furuno M."/>
            <person name="Futaki S."/>
            <person name="Gariboldi M."/>
            <person name="Georgii-Hemming P."/>
            <person name="Gingeras T.R."/>
            <person name="Gojobori T."/>
            <person name="Green R.E."/>
            <person name="Gustincich S."/>
            <person name="Harbers M."/>
            <person name="Hayashi Y."/>
            <person name="Hensch T.K."/>
            <person name="Hirokawa N."/>
            <person name="Hill D."/>
            <person name="Huminiecki L."/>
            <person name="Iacono M."/>
            <person name="Ikeo K."/>
            <person name="Iwama A."/>
            <person name="Ishikawa T."/>
            <person name="Jakt M."/>
            <person name="Kanapin A."/>
            <person name="Katoh M."/>
            <person name="Kawasawa Y."/>
            <person name="Kelso J."/>
            <person name="Kitamura H."/>
            <person name="Kitano H."/>
            <person name="Kollias G."/>
            <person name="Krishnan S.P."/>
            <person name="Kruger A."/>
            <person name="Kummerfeld S.K."/>
            <person name="Kurochkin I.V."/>
            <person name="Lareau L.F."/>
            <person name="Lazarevic D."/>
            <person name="Lipovich L."/>
            <person name="Liu J."/>
            <person name="Liuni S."/>
            <person name="McWilliam S."/>
            <person name="Madan Babu M."/>
            <person name="Madera M."/>
            <person name="Marchionni L."/>
            <person name="Matsuda H."/>
            <person name="Matsuzawa S."/>
            <person name="Miki H."/>
            <person name="Mignone F."/>
            <person name="Miyake S."/>
            <person name="Morris K."/>
            <person name="Mottagui-Tabar S."/>
            <person name="Mulder N."/>
            <person name="Nakano N."/>
            <person name="Nakauchi H."/>
            <person name="Ng P."/>
            <person name="Nilsson R."/>
            <person name="Nishiguchi S."/>
            <person name="Nishikawa S."/>
            <person name="Nori F."/>
            <person name="Ohara O."/>
            <person name="Okazaki Y."/>
            <person name="Orlando V."/>
            <person name="Pang K.C."/>
            <person name="Pavan W.J."/>
            <person name="Pavesi G."/>
            <person name="Pesole G."/>
            <person name="Petrovsky N."/>
            <person name="Piazza S."/>
            <person name="Reed J."/>
            <person name="Reid J.F."/>
            <person name="Ring B.Z."/>
            <person name="Ringwald M."/>
            <person name="Rost B."/>
            <person name="Ruan Y."/>
            <person name="Salzberg S.L."/>
            <person name="Sandelin A."/>
            <person name="Schneider C."/>
            <person name="Schoenbach C."/>
            <person name="Sekiguchi K."/>
            <person name="Semple C.A."/>
            <person name="Seno S."/>
            <person name="Sessa L."/>
            <person name="Sheng Y."/>
            <person name="Shibata Y."/>
            <person name="Shimada H."/>
            <person name="Shimada K."/>
            <person name="Silva D."/>
            <person name="Sinclair B."/>
            <person name="Sperling S."/>
            <person name="Stupka E."/>
            <person name="Sugiura K."/>
            <person name="Sultana R."/>
            <person name="Takenaka Y."/>
            <person name="Taki K."/>
            <person name="Tammoja K."/>
            <person name="Tan S.L."/>
            <person name="Tang S."/>
            <person name="Taylor M.S."/>
            <person name="Tegner J."/>
            <person name="Teichmann S.A."/>
            <person name="Ueda H.R."/>
            <person name="van Nimwegen E."/>
            <person name="Verardo R."/>
            <person name="Wei C.L."/>
            <person name="Yagi K."/>
            <person name="Yamanishi H."/>
            <person name="Zabarovsky E."/>
            <person name="Zhu S."/>
            <person name="Zimmer A."/>
            <person name="Hide W."/>
            <person name="Bult C."/>
            <person name="Grimmond S.M."/>
            <person name="Teasdale R.D."/>
            <person name="Liu E.T."/>
            <person name="Brusic V."/>
            <person name="Quackenbush J."/>
            <person name="Wahlestedt C."/>
            <person name="Mattick J.S."/>
            <person name="Hume D.A."/>
            <person name="Kai C."/>
            <person name="Sasaki D."/>
            <person name="Tomaru Y."/>
            <person name="Fukuda S."/>
            <person name="Kanamori-Katayama M."/>
            <person name="Suzuki M."/>
            <person name="Aoki J."/>
            <person name="Arakawa T."/>
            <person name="Iida J."/>
            <person name="Imamura K."/>
            <person name="Itoh M."/>
            <person name="Kato T."/>
            <person name="Kawaji H."/>
            <person name="Kawagashira N."/>
            <person name="Kawashima T."/>
            <person name="Kojima M."/>
            <person name="Kondo S."/>
            <person name="Konno H."/>
            <person name="Nakano K."/>
            <person name="Ninomiya N."/>
            <person name="Nishio T."/>
            <person name="Okada M."/>
            <person name="Plessy C."/>
            <person name="Shibata K."/>
            <person name="Shiraki T."/>
            <person name="Suzuki S."/>
            <person name="Tagami M."/>
            <person name="Waki K."/>
            <person name="Watahiki A."/>
            <person name="Okamura-Oho Y."/>
            <person name="Suzuki H."/>
            <person name="Kawai J."/>
            <person name="Hayashizaki Y."/>
        </authorList>
    </citation>
    <scope>NUCLEOTIDE SEQUENCE [LARGE SCALE MRNA]</scope>
    <source>
        <strain>C57BL/6J</strain>
        <tissue>Bone marrow</tissue>
    </source>
</reference>
<reference key="2">
    <citation type="journal article" date="2004" name="Genome Res.">
        <title>The status, quality, and expansion of the NIH full-length cDNA project: the Mammalian Gene Collection (MGC).</title>
        <authorList>
            <consortium name="The MGC Project Team"/>
        </authorList>
    </citation>
    <scope>NUCLEOTIDE SEQUENCE [LARGE SCALE MRNA]</scope>
    <source>
        <strain>FVB/N</strain>
        <tissue>Mammary tumor</tissue>
    </source>
</reference>
<reference key="3">
    <citation type="journal article" date="2010" name="Cell">
        <title>A tissue-specific atlas of mouse protein phosphorylation and expression.</title>
        <authorList>
            <person name="Huttlin E.L."/>
            <person name="Jedrychowski M.P."/>
            <person name="Elias J.E."/>
            <person name="Goswami T."/>
            <person name="Rad R."/>
            <person name="Beausoleil S.A."/>
            <person name="Villen J."/>
            <person name="Haas W."/>
            <person name="Sowa M.E."/>
            <person name="Gygi S.P."/>
        </authorList>
    </citation>
    <scope>IDENTIFICATION BY MASS SPECTROMETRY [LARGE SCALE ANALYSIS]</scope>
    <source>
        <tissue>Spleen</tissue>
        <tissue>Testis</tissue>
    </source>
</reference>
<reference key="4">
    <citation type="journal article" date="2010" name="Nature">
        <title>NRMT is an alpha-N-methyltransferase that methylates RCC1 and retinoblastoma protein.</title>
        <authorList>
            <person name="Tooley C.E."/>
            <person name="Petkowski J.J."/>
            <person name="Muratore-Schroeder T.L."/>
            <person name="Balsbaugh J.L."/>
            <person name="Shabanowitz J."/>
            <person name="Sabat M."/>
            <person name="Minor W."/>
            <person name="Hunt D.F."/>
            <person name="Macara I.G."/>
        </authorList>
    </citation>
    <scope>CLEAVAGE OF INITIATOR METHIONINE</scope>
    <scope>METHYLATION AT PRO-2</scope>
</reference>
<comment type="function">
    <text evidence="1">Guanine-nucleotide releasing factor that promotes the exchange of Ran-bound GDP by GTP, and thereby plays an important role in RAN-mediated functions in nuclear import and mitosis. Contributes to the generation of high levels of chromosome-associated, GTP-bound RAN, which is important for mitotic spindle assembly and normal progress through mitosis. Via its role in maintaining high levels of GTP-bound RAN in the nucleus, contributes to the release of cargo proteins from importins after nuclear import. Involved in the regulation of onset of chromosome condensation in the S phase. Binds both to the nucleosomes and double-stranded DNA.</text>
</comment>
<comment type="subunit">
    <text evidence="1">Interacts with RAN. Interacts with KPNA3. Interacts (via N-terminus and RCC1 repeats) with KPNA4. Interacts with ARRB2; the interaction is detected in the nucleus upon OR1D2 stimulation.</text>
</comment>
<comment type="subcellular location">
    <subcellularLocation>
        <location evidence="1">Nucleus</location>
    </subcellularLocation>
    <subcellularLocation>
        <location evidence="1">Chromosome</location>
    </subcellularLocation>
    <subcellularLocation>
        <location evidence="1">Cytoplasm</location>
    </subcellularLocation>
    <text evidence="1">Predominantly nuclear in interphase cells. Binds to mitotic chromosomes.</text>
</comment>
<comment type="PTM">
    <text evidence="1">N-terminal methylation by METTL11A/NTM1 is required for binding double-stranded DNA and stable chromatin association. Dimethylation produces a permanent positive charge on the amino group, which facilitates electrostatic binding to the phosphate groups on DNA, while inhibiting histone-binding. Methylated tail helps retain RCC1 on chromosomes during nucleotide exchange on Ran.</text>
</comment>
<protein>
    <recommendedName>
        <fullName>Regulator of chromosome condensation</fullName>
    </recommendedName>
    <alternativeName>
        <fullName>Chromosome condensation protein 1</fullName>
    </alternativeName>
</protein>
<organism>
    <name type="scientific">Mus musculus</name>
    <name type="common">Mouse</name>
    <dbReference type="NCBI Taxonomy" id="10090"/>
    <lineage>
        <taxon>Eukaryota</taxon>
        <taxon>Metazoa</taxon>
        <taxon>Chordata</taxon>
        <taxon>Craniata</taxon>
        <taxon>Vertebrata</taxon>
        <taxon>Euteleostomi</taxon>
        <taxon>Mammalia</taxon>
        <taxon>Eutheria</taxon>
        <taxon>Euarchontoglires</taxon>
        <taxon>Glires</taxon>
        <taxon>Rodentia</taxon>
        <taxon>Myomorpha</taxon>
        <taxon>Muroidea</taxon>
        <taxon>Muridae</taxon>
        <taxon>Murinae</taxon>
        <taxon>Mus</taxon>
        <taxon>Mus</taxon>
    </lineage>
</organism>